<reference key="1">
    <citation type="submission" date="2001-04" db="EMBL/GenBank/DDBJ databases">
        <title>Oryza sativa calmodulin-2 mRNA complete cds.</title>
        <authorList>
            <person name="Furukawa T."/>
            <person name="Hashimoto J."/>
            <person name="Sakaguchi K."/>
        </authorList>
    </citation>
    <scope>NUCLEOTIDE SEQUENCE [MRNA]</scope>
    <source>
        <strain>cv. Nipponbare</strain>
    </source>
</reference>
<reference key="2">
    <citation type="journal article" date="2005" name="BMC Biol.">
        <title>The sequence of rice chromosomes 11 and 12, rich in disease resistance genes and recent gene duplications.</title>
        <authorList>
            <consortium name="The rice chromosomes 11 and 12 sequencing consortia"/>
        </authorList>
    </citation>
    <scope>NUCLEOTIDE SEQUENCE [LARGE SCALE GENOMIC DNA]</scope>
    <source>
        <strain>cv. Nipponbare</strain>
    </source>
</reference>
<reference key="3">
    <citation type="journal article" date="2005" name="Nature">
        <title>The map-based sequence of the rice genome.</title>
        <authorList>
            <consortium name="International rice genome sequencing project (IRGSP)"/>
        </authorList>
    </citation>
    <scope>NUCLEOTIDE SEQUENCE [LARGE SCALE GENOMIC DNA]</scope>
    <source>
        <strain>cv. Nipponbare</strain>
    </source>
</reference>
<reference key="4">
    <citation type="journal article" date="2008" name="Nucleic Acids Res.">
        <title>The rice annotation project database (RAP-DB): 2008 update.</title>
        <authorList>
            <consortium name="The rice annotation project (RAP)"/>
        </authorList>
    </citation>
    <scope>GENOME REANNOTATION</scope>
    <source>
        <strain>cv. Nipponbare</strain>
    </source>
</reference>
<reference key="5">
    <citation type="journal article" date="2013" name="Rice">
        <title>Improvement of the Oryza sativa Nipponbare reference genome using next generation sequence and optical map data.</title>
        <authorList>
            <person name="Kawahara Y."/>
            <person name="de la Bastide M."/>
            <person name="Hamilton J.P."/>
            <person name="Kanamori H."/>
            <person name="McCombie W.R."/>
            <person name="Ouyang S."/>
            <person name="Schwartz D.C."/>
            <person name="Tanaka T."/>
            <person name="Wu J."/>
            <person name="Zhou S."/>
            <person name="Childs K.L."/>
            <person name="Davidson R.M."/>
            <person name="Lin H."/>
            <person name="Quesada-Ocampo L."/>
            <person name="Vaillancourt B."/>
            <person name="Sakai H."/>
            <person name="Lee S.S."/>
            <person name="Kim J."/>
            <person name="Numa H."/>
            <person name="Itoh T."/>
            <person name="Buell C.R."/>
            <person name="Matsumoto T."/>
        </authorList>
    </citation>
    <scope>GENOME REANNOTATION</scope>
    <source>
        <strain>cv. Nipponbare</strain>
    </source>
</reference>
<reference key="6">
    <citation type="journal article" date="2005" name="PLoS Biol.">
        <title>The genomes of Oryza sativa: a history of duplications.</title>
        <authorList>
            <person name="Yu J."/>
            <person name="Wang J."/>
            <person name="Lin W."/>
            <person name="Li S."/>
            <person name="Li H."/>
            <person name="Zhou J."/>
            <person name="Ni P."/>
            <person name="Dong W."/>
            <person name="Hu S."/>
            <person name="Zeng C."/>
            <person name="Zhang J."/>
            <person name="Zhang Y."/>
            <person name="Li R."/>
            <person name="Xu Z."/>
            <person name="Li S."/>
            <person name="Li X."/>
            <person name="Zheng H."/>
            <person name="Cong L."/>
            <person name="Lin L."/>
            <person name="Yin J."/>
            <person name="Geng J."/>
            <person name="Li G."/>
            <person name="Shi J."/>
            <person name="Liu J."/>
            <person name="Lv H."/>
            <person name="Li J."/>
            <person name="Wang J."/>
            <person name="Deng Y."/>
            <person name="Ran L."/>
            <person name="Shi X."/>
            <person name="Wang X."/>
            <person name="Wu Q."/>
            <person name="Li C."/>
            <person name="Ren X."/>
            <person name="Wang J."/>
            <person name="Wang X."/>
            <person name="Li D."/>
            <person name="Liu D."/>
            <person name="Zhang X."/>
            <person name="Ji Z."/>
            <person name="Zhao W."/>
            <person name="Sun Y."/>
            <person name="Zhang Z."/>
            <person name="Bao J."/>
            <person name="Han Y."/>
            <person name="Dong L."/>
            <person name="Ji J."/>
            <person name="Chen P."/>
            <person name="Wu S."/>
            <person name="Liu J."/>
            <person name="Xiao Y."/>
            <person name="Bu D."/>
            <person name="Tan J."/>
            <person name="Yang L."/>
            <person name="Ye C."/>
            <person name="Zhang J."/>
            <person name="Xu J."/>
            <person name="Zhou Y."/>
            <person name="Yu Y."/>
            <person name="Zhang B."/>
            <person name="Zhuang S."/>
            <person name="Wei H."/>
            <person name="Liu B."/>
            <person name="Lei M."/>
            <person name="Yu H."/>
            <person name="Li Y."/>
            <person name="Xu H."/>
            <person name="Wei S."/>
            <person name="He X."/>
            <person name="Fang L."/>
            <person name="Zhang Z."/>
            <person name="Zhang Y."/>
            <person name="Huang X."/>
            <person name="Su Z."/>
            <person name="Tong W."/>
            <person name="Li J."/>
            <person name="Tong Z."/>
            <person name="Li S."/>
            <person name="Ye J."/>
            <person name="Wang L."/>
            <person name="Fang L."/>
            <person name="Lei T."/>
            <person name="Chen C.-S."/>
            <person name="Chen H.-C."/>
            <person name="Xu Z."/>
            <person name="Li H."/>
            <person name="Huang H."/>
            <person name="Zhang F."/>
            <person name="Xu H."/>
            <person name="Li N."/>
            <person name="Zhao C."/>
            <person name="Li S."/>
            <person name="Dong L."/>
            <person name="Huang Y."/>
            <person name="Li L."/>
            <person name="Xi Y."/>
            <person name="Qi Q."/>
            <person name="Li W."/>
            <person name="Zhang B."/>
            <person name="Hu W."/>
            <person name="Zhang Y."/>
            <person name="Tian X."/>
            <person name="Jiao Y."/>
            <person name="Liang X."/>
            <person name="Jin J."/>
            <person name="Gao L."/>
            <person name="Zheng W."/>
            <person name="Hao B."/>
            <person name="Liu S.-M."/>
            <person name="Wang W."/>
            <person name="Yuan L."/>
            <person name="Cao M."/>
            <person name="McDermott J."/>
            <person name="Samudrala R."/>
            <person name="Wang J."/>
            <person name="Wong G.K.-S."/>
            <person name="Yang H."/>
        </authorList>
    </citation>
    <scope>NUCLEOTIDE SEQUENCE [LARGE SCALE GENOMIC DNA]</scope>
    <source>
        <strain>cv. Nipponbare</strain>
    </source>
</reference>
<reference key="7">
    <citation type="journal article" date="2007" name="BMC Plant Biol.">
        <title>Genome-wide identification and analyses of the rice calmodulin and related potential calcium sensor proteins.</title>
        <authorList>
            <person name="Boonburapong B."/>
            <person name="Buaboocha T."/>
        </authorList>
    </citation>
    <scope>GENE FAMILY</scope>
    <scope>NOMENCLATURE</scope>
</reference>
<name>CML5_ORYSJ</name>
<evidence type="ECO:0000250" key="1"/>
<evidence type="ECO:0000255" key="2">
    <source>
        <dbReference type="PROSITE-ProRule" id="PRU00448"/>
    </source>
</evidence>
<evidence type="ECO:0000305" key="3"/>
<gene>
    <name type="primary">CML5</name>
    <name type="ordered locus">Os12g0603800</name>
    <name type="ordered locus">LOC_Os12g41110</name>
    <name type="ORF">OsJ_035343</name>
</gene>
<keyword id="KW-0106">Calcium</keyword>
<keyword id="KW-0479">Metal-binding</keyword>
<keyword id="KW-0488">Methylation</keyword>
<keyword id="KW-1185">Reference proteome</keyword>
<keyword id="KW-0677">Repeat</keyword>
<comment type="function">
    <text evidence="1">Potential calcium sensor.</text>
</comment>
<comment type="similarity">
    <text evidence="3">Belongs to the calmodulin family.</text>
</comment>
<organism>
    <name type="scientific">Oryza sativa subsp. japonica</name>
    <name type="common">Rice</name>
    <dbReference type="NCBI Taxonomy" id="39947"/>
    <lineage>
        <taxon>Eukaryota</taxon>
        <taxon>Viridiplantae</taxon>
        <taxon>Streptophyta</taxon>
        <taxon>Embryophyta</taxon>
        <taxon>Tracheophyta</taxon>
        <taxon>Spermatophyta</taxon>
        <taxon>Magnoliopsida</taxon>
        <taxon>Liliopsida</taxon>
        <taxon>Poales</taxon>
        <taxon>Poaceae</taxon>
        <taxon>BOP clade</taxon>
        <taxon>Oryzoideae</taxon>
        <taxon>Oryzeae</taxon>
        <taxon>Oryzinae</taxon>
        <taxon>Oryza</taxon>
        <taxon>Oryza sativa</taxon>
    </lineage>
</organism>
<dbReference type="EMBL" id="AB060552">
    <property type="protein sequence ID" value="BAB69673.1"/>
    <property type="molecule type" value="mRNA"/>
</dbReference>
<dbReference type="EMBL" id="DP000011">
    <property type="protein sequence ID" value="ABA99816.1"/>
    <property type="molecule type" value="Genomic_DNA"/>
</dbReference>
<dbReference type="EMBL" id="AP008218">
    <property type="protein sequence ID" value="BAF30234.1"/>
    <property type="molecule type" value="Genomic_DNA"/>
</dbReference>
<dbReference type="EMBL" id="AP014968">
    <property type="protein sequence ID" value="BAT17968.1"/>
    <property type="molecule type" value="Genomic_DNA"/>
</dbReference>
<dbReference type="EMBL" id="CM000149">
    <property type="protein sequence ID" value="EAZ21134.1"/>
    <property type="molecule type" value="Genomic_DNA"/>
</dbReference>
<dbReference type="RefSeq" id="XP_015618906.1">
    <property type="nucleotide sequence ID" value="XM_015763420.1"/>
</dbReference>
<dbReference type="SMR" id="Q948R0"/>
<dbReference type="FunCoup" id="Q948R0">
    <property type="interactions" value="160"/>
</dbReference>
<dbReference type="STRING" id="39947.Q948R0"/>
<dbReference type="PaxDb" id="39947-Q948R0"/>
<dbReference type="EnsemblPlants" id="Os12t0603800-00">
    <property type="protein sequence ID" value="Os12t0603800-00"/>
    <property type="gene ID" value="Os12g0603800"/>
</dbReference>
<dbReference type="Gramene" id="Os12t0603800-00">
    <property type="protein sequence ID" value="Os12t0603800-00"/>
    <property type="gene ID" value="Os12g0603800"/>
</dbReference>
<dbReference type="KEGG" id="dosa:Os12g0603800"/>
<dbReference type="eggNOG" id="KOG0027">
    <property type="taxonomic scope" value="Eukaryota"/>
</dbReference>
<dbReference type="HOGENOM" id="CLU_061288_2_0_1"/>
<dbReference type="InParanoid" id="Q948R0"/>
<dbReference type="OMA" id="HLMARKM"/>
<dbReference type="OrthoDB" id="26525at2759"/>
<dbReference type="Proteomes" id="UP000000763">
    <property type="component" value="Chromosome 12"/>
</dbReference>
<dbReference type="Proteomes" id="UP000007752">
    <property type="component" value="Chromosome 12"/>
</dbReference>
<dbReference type="Proteomes" id="UP000059680">
    <property type="component" value="Chromosome 12"/>
</dbReference>
<dbReference type="GO" id="GO:0005737">
    <property type="term" value="C:cytoplasm"/>
    <property type="evidence" value="ECO:0000318"/>
    <property type="project" value="GO_Central"/>
</dbReference>
<dbReference type="GO" id="GO:0005509">
    <property type="term" value="F:calcium ion binding"/>
    <property type="evidence" value="ECO:0000318"/>
    <property type="project" value="GO_Central"/>
</dbReference>
<dbReference type="GO" id="GO:0030234">
    <property type="term" value="F:enzyme regulator activity"/>
    <property type="evidence" value="ECO:0000318"/>
    <property type="project" value="GO_Central"/>
</dbReference>
<dbReference type="CDD" id="cd00051">
    <property type="entry name" value="EFh"/>
    <property type="match status" value="2"/>
</dbReference>
<dbReference type="FunFam" id="1.10.238.10:FF:000305">
    <property type="entry name" value="Calmodulin, variant"/>
    <property type="match status" value="1"/>
</dbReference>
<dbReference type="FunFam" id="1.10.238.10:FF:000327">
    <property type="entry name" value="Calmodulin-like protein 11"/>
    <property type="match status" value="1"/>
</dbReference>
<dbReference type="Gene3D" id="1.10.238.10">
    <property type="entry name" value="EF-hand"/>
    <property type="match status" value="3"/>
</dbReference>
<dbReference type="InterPro" id="IPR050230">
    <property type="entry name" value="CALM/Myosin/TropC-like"/>
</dbReference>
<dbReference type="InterPro" id="IPR011992">
    <property type="entry name" value="EF-hand-dom_pair"/>
</dbReference>
<dbReference type="InterPro" id="IPR018247">
    <property type="entry name" value="EF_Hand_1_Ca_BS"/>
</dbReference>
<dbReference type="InterPro" id="IPR002048">
    <property type="entry name" value="EF_hand_dom"/>
</dbReference>
<dbReference type="PANTHER" id="PTHR23048:SF53">
    <property type="entry name" value="CALMODULIN"/>
    <property type="match status" value="1"/>
</dbReference>
<dbReference type="PANTHER" id="PTHR23048">
    <property type="entry name" value="MYOSIN LIGHT CHAIN 1, 3"/>
    <property type="match status" value="1"/>
</dbReference>
<dbReference type="Pfam" id="PF13499">
    <property type="entry name" value="EF-hand_7"/>
    <property type="match status" value="2"/>
</dbReference>
<dbReference type="SMART" id="SM00054">
    <property type="entry name" value="EFh"/>
    <property type="match status" value="4"/>
</dbReference>
<dbReference type="SUPFAM" id="SSF47473">
    <property type="entry name" value="EF-hand"/>
    <property type="match status" value="1"/>
</dbReference>
<dbReference type="PROSITE" id="PS00018">
    <property type="entry name" value="EF_HAND_1"/>
    <property type="match status" value="4"/>
</dbReference>
<dbReference type="PROSITE" id="PS50222">
    <property type="entry name" value="EF_HAND_2"/>
    <property type="match status" value="4"/>
</dbReference>
<sequence>MAEVEVRVRQEQVAEFRETFAFFDKDGDGCITLEELDTVVRSLGQTPTREELAEMIRDVDVDGNGTIEFAEFLALMARKASRGGENGGGGDDSGDAADEELREAFKVFDKDQDGLISAAELRHVMISLGEKLTDEEVEQMIREADLDGDGQVNFDEFVRMMMLSDQ</sequence>
<proteinExistence type="evidence at transcript level"/>
<accession>Q948R0</accession>
<accession>A0A0P0YCR9</accession>
<protein>
    <recommendedName>
        <fullName>Calmodulin-like protein 5</fullName>
    </recommendedName>
    <alternativeName>
        <fullName>Calmodulin-2</fullName>
    </alternativeName>
    <alternativeName>
        <fullName>OsCAM-2</fullName>
    </alternativeName>
</protein>
<feature type="chain" id="PRO_0000338420" description="Calmodulin-like protein 5">
    <location>
        <begin position="1"/>
        <end position="166"/>
    </location>
</feature>
<feature type="domain" description="EF-hand 1" evidence="2">
    <location>
        <begin position="11"/>
        <end position="46"/>
    </location>
</feature>
<feature type="domain" description="EF-hand 2" evidence="2">
    <location>
        <begin position="47"/>
        <end position="82"/>
    </location>
</feature>
<feature type="domain" description="EF-hand 3" evidence="2">
    <location>
        <begin position="96"/>
        <end position="131"/>
    </location>
</feature>
<feature type="domain" description="EF-hand 4" evidence="2">
    <location>
        <begin position="132"/>
        <end position="166"/>
    </location>
</feature>
<feature type="binding site" evidence="2">
    <location>
        <position position="24"/>
    </location>
    <ligand>
        <name>Ca(2+)</name>
        <dbReference type="ChEBI" id="CHEBI:29108"/>
        <label>1</label>
    </ligand>
</feature>
<feature type="binding site" evidence="2">
    <location>
        <position position="26"/>
    </location>
    <ligand>
        <name>Ca(2+)</name>
        <dbReference type="ChEBI" id="CHEBI:29108"/>
        <label>1</label>
    </ligand>
</feature>
<feature type="binding site" evidence="2">
    <location>
        <position position="28"/>
    </location>
    <ligand>
        <name>Ca(2+)</name>
        <dbReference type="ChEBI" id="CHEBI:29108"/>
        <label>1</label>
    </ligand>
</feature>
<feature type="binding site" evidence="2">
    <location>
        <position position="30"/>
    </location>
    <ligand>
        <name>Ca(2+)</name>
        <dbReference type="ChEBI" id="CHEBI:29108"/>
        <label>1</label>
    </ligand>
</feature>
<feature type="binding site" evidence="2">
    <location>
        <position position="35"/>
    </location>
    <ligand>
        <name>Ca(2+)</name>
        <dbReference type="ChEBI" id="CHEBI:29108"/>
        <label>1</label>
    </ligand>
</feature>
<feature type="binding site" evidence="2">
    <location>
        <position position="60"/>
    </location>
    <ligand>
        <name>Ca(2+)</name>
        <dbReference type="ChEBI" id="CHEBI:29108"/>
        <label>2</label>
    </ligand>
</feature>
<feature type="binding site" evidence="2">
    <location>
        <position position="62"/>
    </location>
    <ligand>
        <name>Ca(2+)</name>
        <dbReference type="ChEBI" id="CHEBI:29108"/>
        <label>2</label>
    </ligand>
</feature>
<feature type="binding site" evidence="2">
    <location>
        <position position="64"/>
    </location>
    <ligand>
        <name>Ca(2+)</name>
        <dbReference type="ChEBI" id="CHEBI:29108"/>
        <label>2</label>
    </ligand>
</feature>
<feature type="binding site" evidence="2">
    <location>
        <position position="66"/>
    </location>
    <ligand>
        <name>Ca(2+)</name>
        <dbReference type="ChEBI" id="CHEBI:29108"/>
        <label>2</label>
    </ligand>
</feature>
<feature type="binding site" evidence="2">
    <location>
        <position position="71"/>
    </location>
    <ligand>
        <name>Ca(2+)</name>
        <dbReference type="ChEBI" id="CHEBI:29108"/>
        <label>2</label>
    </ligand>
</feature>
<feature type="binding site" evidence="2">
    <location>
        <position position="109"/>
    </location>
    <ligand>
        <name>Ca(2+)</name>
        <dbReference type="ChEBI" id="CHEBI:29108"/>
        <label>3</label>
    </ligand>
</feature>
<feature type="binding site" evidence="2">
    <location>
        <position position="111"/>
    </location>
    <ligand>
        <name>Ca(2+)</name>
        <dbReference type="ChEBI" id="CHEBI:29108"/>
        <label>3</label>
    </ligand>
</feature>
<feature type="binding site" evidence="2">
    <location>
        <position position="113"/>
    </location>
    <ligand>
        <name>Ca(2+)</name>
        <dbReference type="ChEBI" id="CHEBI:29108"/>
        <label>3</label>
    </ligand>
</feature>
<feature type="binding site" evidence="2">
    <location>
        <position position="120"/>
    </location>
    <ligand>
        <name>Ca(2+)</name>
        <dbReference type="ChEBI" id="CHEBI:29108"/>
        <label>3</label>
    </ligand>
</feature>
<feature type="binding site" evidence="2">
    <location>
        <position position="145"/>
    </location>
    <ligand>
        <name>Ca(2+)</name>
        <dbReference type="ChEBI" id="CHEBI:29108"/>
        <label>4</label>
    </ligand>
</feature>
<feature type="binding site" evidence="2">
    <location>
        <position position="147"/>
    </location>
    <ligand>
        <name>Ca(2+)</name>
        <dbReference type="ChEBI" id="CHEBI:29108"/>
        <label>4</label>
    </ligand>
</feature>
<feature type="binding site" evidence="2">
    <location>
        <position position="149"/>
    </location>
    <ligand>
        <name>Ca(2+)</name>
        <dbReference type="ChEBI" id="CHEBI:29108"/>
        <label>4</label>
    </ligand>
</feature>
<feature type="binding site" evidence="2">
    <location>
        <position position="151"/>
    </location>
    <ligand>
        <name>Ca(2+)</name>
        <dbReference type="ChEBI" id="CHEBI:29108"/>
        <label>4</label>
    </ligand>
</feature>
<feature type="binding site" evidence="2">
    <location>
        <position position="156"/>
    </location>
    <ligand>
        <name>Ca(2+)</name>
        <dbReference type="ChEBI" id="CHEBI:29108"/>
        <label>4</label>
    </ligand>
</feature>
<feature type="modified residue" description="N6,N6,N6-trimethyllysine" evidence="1">
    <location>
        <position position="131"/>
    </location>
</feature>